<protein>
    <recommendedName>
        <fullName evidence="3">Tropinone reductase homolog At2g29290</fullName>
        <ecNumber evidence="3">1.1.1.-</ecNumber>
    </recommendedName>
</protein>
<sequence>MDKRWSLQGMNALVTGGTKGIGEAVVEELSILGARVHTCARDETQLQERLREWQEKGFQVTTSICDVSLREQREKLMETVSSLFQGKLNILVNNVGTLMLKPTTEYTAEEFSFLMATNLDSAFHISQLAHPLLKASGSGSIVLMSSIAGVVHVGVGSIYGATKGAMNQLARNLACEWASDNIRTNAICPWLITTPLISDLLSVEEMKKEAEERTPMGRVGEANEVSPLVAFLCLPAASYITGQVICVDGGLTVNGFSYQPHA</sequence>
<feature type="chain" id="PRO_0000432361" description="Tropinone reductase homolog At2g29290">
    <location>
        <begin position="1"/>
        <end position="262"/>
    </location>
</feature>
<feature type="active site" description="Proton acceptor" evidence="2">
    <location>
        <position position="159"/>
    </location>
</feature>
<feature type="binding site" evidence="1">
    <location>
        <begin position="13"/>
        <end position="37"/>
    </location>
    <ligand>
        <name>NADP(+)</name>
        <dbReference type="ChEBI" id="CHEBI:58349"/>
    </ligand>
</feature>
<feature type="binding site" evidence="1">
    <location>
        <position position="146"/>
    </location>
    <ligand>
        <name>substrate</name>
    </ligand>
</feature>
<feature type="splice variant" id="VSP_057495" description="In isoform 2.">
    <original>MDKRWSLQGMNALVTGGTKGIG</original>
    <variation>MESSR</variation>
    <location>
        <begin position="1"/>
        <end position="22"/>
    </location>
</feature>
<gene>
    <name evidence="4" type="ordered locus">At2g29290</name>
    <name evidence="5" type="ORF">F16P2.33</name>
</gene>
<proteinExistence type="evidence at transcript level"/>
<evidence type="ECO:0000250" key="1">
    <source>
        <dbReference type="UniProtKB" id="P50162"/>
    </source>
</evidence>
<evidence type="ECO:0000255" key="2">
    <source>
        <dbReference type="PROSITE-ProRule" id="PRU10001"/>
    </source>
</evidence>
<evidence type="ECO:0000305" key="3"/>
<evidence type="ECO:0000312" key="4">
    <source>
        <dbReference type="Araport" id="AT2G29290"/>
    </source>
</evidence>
<evidence type="ECO:0000312" key="5">
    <source>
        <dbReference type="EMBL" id="AAC95208.1"/>
    </source>
</evidence>
<evidence type="ECO:0000312" key="6">
    <source>
        <dbReference type="Proteomes" id="UP000006548"/>
    </source>
</evidence>
<dbReference type="EC" id="1.1.1.-" evidence="3"/>
<dbReference type="EMBL" id="AC004561">
    <property type="protein sequence ID" value="AAC95208.1"/>
    <property type="molecule type" value="Genomic_DNA"/>
</dbReference>
<dbReference type="EMBL" id="CP002685">
    <property type="protein sequence ID" value="AEC08228.1"/>
    <property type="molecule type" value="Genomic_DNA"/>
</dbReference>
<dbReference type="EMBL" id="CP002685">
    <property type="protein sequence ID" value="AEC08229.1"/>
    <property type="molecule type" value="Genomic_DNA"/>
</dbReference>
<dbReference type="EMBL" id="BT010409">
    <property type="protein sequence ID" value="AAQ62410.1"/>
    <property type="molecule type" value="mRNA"/>
</dbReference>
<dbReference type="EMBL" id="AK175125">
    <property type="protein sequence ID" value="BAD42888.1"/>
    <property type="molecule type" value="mRNA"/>
</dbReference>
<dbReference type="PIR" id="E84694">
    <property type="entry name" value="E84694"/>
</dbReference>
<dbReference type="RefSeq" id="NP_001118408.1">
    <molecule id="Q9ZW13-1"/>
    <property type="nucleotide sequence ID" value="NM_001124936.2"/>
</dbReference>
<dbReference type="RefSeq" id="NP_180490.2">
    <molecule id="Q9ZW13-2"/>
    <property type="nucleotide sequence ID" value="NM_128483.3"/>
</dbReference>
<dbReference type="SMR" id="Q9ZW13"/>
<dbReference type="FunCoup" id="Q9ZW13">
    <property type="interactions" value="82"/>
</dbReference>
<dbReference type="STRING" id="3702.Q9ZW13"/>
<dbReference type="PaxDb" id="3702-AT2G29290.2"/>
<dbReference type="ProteomicsDB" id="242802">
    <molecule id="Q9ZW13-1"/>
</dbReference>
<dbReference type="EnsemblPlants" id="AT2G29290.1">
    <molecule id="Q9ZW13-2"/>
    <property type="protein sequence ID" value="AT2G29290.1"/>
    <property type="gene ID" value="AT2G29290"/>
</dbReference>
<dbReference type="EnsemblPlants" id="AT2G29290.2">
    <molecule id="Q9ZW13-1"/>
    <property type="protein sequence ID" value="AT2G29290.2"/>
    <property type="gene ID" value="AT2G29290"/>
</dbReference>
<dbReference type="GeneID" id="817478"/>
<dbReference type="Gramene" id="AT2G29290.1">
    <molecule id="Q9ZW13-2"/>
    <property type="protein sequence ID" value="AT2G29290.1"/>
    <property type="gene ID" value="AT2G29290"/>
</dbReference>
<dbReference type="Gramene" id="AT2G29290.2">
    <molecule id="Q9ZW13-1"/>
    <property type="protein sequence ID" value="AT2G29290.2"/>
    <property type="gene ID" value="AT2G29290"/>
</dbReference>
<dbReference type="KEGG" id="ath:AT2G29290"/>
<dbReference type="Araport" id="AT2G29290"/>
<dbReference type="TAIR" id="AT2G29290">
    <property type="gene designation" value="DEG14"/>
</dbReference>
<dbReference type="eggNOG" id="KOG0725">
    <property type="taxonomic scope" value="Eukaryota"/>
</dbReference>
<dbReference type="HOGENOM" id="CLU_010194_1_1_1"/>
<dbReference type="InParanoid" id="Q9ZW13"/>
<dbReference type="OMA" id="ICPLATM"/>
<dbReference type="OrthoDB" id="417891at2759"/>
<dbReference type="PhylomeDB" id="Q9ZW13"/>
<dbReference type="BioCyc" id="ARA:AT2G29290-MONOMER"/>
<dbReference type="PRO" id="PR:Q9ZW13"/>
<dbReference type="Proteomes" id="UP000006548">
    <property type="component" value="Chromosome 2"/>
</dbReference>
<dbReference type="ExpressionAtlas" id="Q9ZW13">
    <property type="expression patterns" value="baseline and differential"/>
</dbReference>
<dbReference type="GO" id="GO:0005777">
    <property type="term" value="C:peroxisome"/>
    <property type="evidence" value="ECO:0007005"/>
    <property type="project" value="TAIR"/>
</dbReference>
<dbReference type="GO" id="GO:0016491">
    <property type="term" value="F:oxidoreductase activity"/>
    <property type="evidence" value="ECO:0007669"/>
    <property type="project" value="UniProtKB-KW"/>
</dbReference>
<dbReference type="FunFam" id="3.40.50.720:FF:000084">
    <property type="entry name" value="Short-chain dehydrogenase reductase"/>
    <property type="match status" value="1"/>
</dbReference>
<dbReference type="Gene3D" id="3.40.50.720">
    <property type="entry name" value="NAD(P)-binding Rossmann-like Domain"/>
    <property type="match status" value="1"/>
</dbReference>
<dbReference type="InterPro" id="IPR036291">
    <property type="entry name" value="NAD(P)-bd_dom_sf"/>
</dbReference>
<dbReference type="InterPro" id="IPR020904">
    <property type="entry name" value="Sc_DH/Rdtase_CS"/>
</dbReference>
<dbReference type="InterPro" id="IPR002347">
    <property type="entry name" value="SDR_fam"/>
</dbReference>
<dbReference type="InterPro" id="IPR045000">
    <property type="entry name" value="TR"/>
</dbReference>
<dbReference type="PANTHER" id="PTHR42898:SF84">
    <property type="entry name" value="SENESCENCE-ASSOCIATED PROTEIN 13"/>
    <property type="match status" value="1"/>
</dbReference>
<dbReference type="PANTHER" id="PTHR42898">
    <property type="entry name" value="TROPINONE REDUCTASE"/>
    <property type="match status" value="1"/>
</dbReference>
<dbReference type="Pfam" id="PF13561">
    <property type="entry name" value="adh_short_C2"/>
    <property type="match status" value="1"/>
</dbReference>
<dbReference type="PRINTS" id="PR00081">
    <property type="entry name" value="GDHRDH"/>
</dbReference>
<dbReference type="PRINTS" id="PR00080">
    <property type="entry name" value="SDRFAMILY"/>
</dbReference>
<dbReference type="SUPFAM" id="SSF51735">
    <property type="entry name" value="NAD(P)-binding Rossmann-fold domains"/>
    <property type="match status" value="1"/>
</dbReference>
<dbReference type="PROSITE" id="PS00061">
    <property type="entry name" value="ADH_SHORT"/>
    <property type="match status" value="1"/>
</dbReference>
<comment type="alternative products">
    <event type="alternative splicing"/>
    <isoform>
        <id>Q9ZW13-1</id>
        <name>1</name>
        <sequence type="displayed"/>
    </isoform>
    <isoform>
        <id>Q9ZW13-2</id>
        <name>2</name>
        <sequence type="described" ref="VSP_057495"/>
    </isoform>
</comment>
<comment type="similarity">
    <text evidence="3">Belongs to the short-chain dehydrogenases/reductases (SDR) family. SDR65C subfamily.</text>
</comment>
<accession>Q9ZW13</accession>
<accession>F4IKL4</accession>
<organism evidence="6">
    <name type="scientific">Arabidopsis thaliana</name>
    <name type="common">Mouse-ear cress</name>
    <dbReference type="NCBI Taxonomy" id="3702"/>
    <lineage>
        <taxon>Eukaryota</taxon>
        <taxon>Viridiplantae</taxon>
        <taxon>Streptophyta</taxon>
        <taxon>Embryophyta</taxon>
        <taxon>Tracheophyta</taxon>
        <taxon>Spermatophyta</taxon>
        <taxon>Magnoliopsida</taxon>
        <taxon>eudicotyledons</taxon>
        <taxon>Gunneridae</taxon>
        <taxon>Pentapetalae</taxon>
        <taxon>rosids</taxon>
        <taxon>malvids</taxon>
        <taxon>Brassicales</taxon>
        <taxon>Brassicaceae</taxon>
        <taxon>Camelineae</taxon>
        <taxon>Arabidopsis</taxon>
    </lineage>
</organism>
<name>TRNH6_ARATH</name>
<reference key="1">
    <citation type="journal article" date="1999" name="Nature">
        <title>Sequence and analysis of chromosome 2 of the plant Arabidopsis thaliana.</title>
        <authorList>
            <person name="Lin X."/>
            <person name="Kaul S."/>
            <person name="Rounsley S.D."/>
            <person name="Shea T.P."/>
            <person name="Benito M.-I."/>
            <person name="Town C.D."/>
            <person name="Fujii C.Y."/>
            <person name="Mason T.M."/>
            <person name="Bowman C.L."/>
            <person name="Barnstead M.E."/>
            <person name="Feldblyum T.V."/>
            <person name="Buell C.R."/>
            <person name="Ketchum K.A."/>
            <person name="Lee J.J."/>
            <person name="Ronning C.M."/>
            <person name="Koo H.L."/>
            <person name="Moffat K.S."/>
            <person name="Cronin L.A."/>
            <person name="Shen M."/>
            <person name="Pai G."/>
            <person name="Van Aken S."/>
            <person name="Umayam L."/>
            <person name="Tallon L.J."/>
            <person name="Gill J.E."/>
            <person name="Adams M.D."/>
            <person name="Carrera A.J."/>
            <person name="Creasy T.H."/>
            <person name="Goodman H.M."/>
            <person name="Somerville C.R."/>
            <person name="Copenhaver G.P."/>
            <person name="Preuss D."/>
            <person name="Nierman W.C."/>
            <person name="White O."/>
            <person name="Eisen J.A."/>
            <person name="Salzberg S.L."/>
            <person name="Fraser C.M."/>
            <person name="Venter J.C."/>
        </authorList>
    </citation>
    <scope>NUCLEOTIDE SEQUENCE [LARGE SCALE GENOMIC DNA]</scope>
    <source>
        <strain>cv. Columbia</strain>
    </source>
</reference>
<reference key="2">
    <citation type="journal article" date="2017" name="Plant J.">
        <title>Araport11: a complete reannotation of the Arabidopsis thaliana reference genome.</title>
        <authorList>
            <person name="Cheng C.Y."/>
            <person name="Krishnakumar V."/>
            <person name="Chan A.P."/>
            <person name="Thibaud-Nissen F."/>
            <person name="Schobel S."/>
            <person name="Town C.D."/>
        </authorList>
    </citation>
    <scope>GENOME REANNOTATION</scope>
    <source>
        <strain>cv. Columbia</strain>
    </source>
</reference>
<reference key="3">
    <citation type="journal article" date="2003" name="Science">
        <title>Empirical analysis of transcriptional activity in the Arabidopsis genome.</title>
        <authorList>
            <person name="Yamada K."/>
            <person name="Lim J."/>
            <person name="Dale J.M."/>
            <person name="Chen H."/>
            <person name="Shinn P."/>
            <person name="Palm C.J."/>
            <person name="Southwick A.M."/>
            <person name="Wu H.C."/>
            <person name="Kim C.J."/>
            <person name="Nguyen M."/>
            <person name="Pham P.K."/>
            <person name="Cheuk R.F."/>
            <person name="Karlin-Newmann G."/>
            <person name="Liu S.X."/>
            <person name="Lam B."/>
            <person name="Sakano H."/>
            <person name="Wu T."/>
            <person name="Yu G."/>
            <person name="Miranda M."/>
            <person name="Quach H.L."/>
            <person name="Tripp M."/>
            <person name="Chang C.H."/>
            <person name="Lee J.M."/>
            <person name="Toriumi M.J."/>
            <person name="Chan M.M."/>
            <person name="Tang C.C."/>
            <person name="Onodera C.S."/>
            <person name="Deng J.M."/>
            <person name="Akiyama K."/>
            <person name="Ansari Y."/>
            <person name="Arakawa T."/>
            <person name="Banh J."/>
            <person name="Banno F."/>
            <person name="Bowser L."/>
            <person name="Brooks S.Y."/>
            <person name="Carninci P."/>
            <person name="Chao Q."/>
            <person name="Choy N."/>
            <person name="Enju A."/>
            <person name="Goldsmith A.D."/>
            <person name="Gurjal M."/>
            <person name="Hansen N.F."/>
            <person name="Hayashizaki Y."/>
            <person name="Johnson-Hopson C."/>
            <person name="Hsuan V.W."/>
            <person name="Iida K."/>
            <person name="Karnes M."/>
            <person name="Khan S."/>
            <person name="Koesema E."/>
            <person name="Ishida J."/>
            <person name="Jiang P.X."/>
            <person name="Jones T."/>
            <person name="Kawai J."/>
            <person name="Kamiya A."/>
            <person name="Meyers C."/>
            <person name="Nakajima M."/>
            <person name="Narusaka M."/>
            <person name="Seki M."/>
            <person name="Sakurai T."/>
            <person name="Satou M."/>
            <person name="Tamse R."/>
            <person name="Vaysberg M."/>
            <person name="Wallender E.K."/>
            <person name="Wong C."/>
            <person name="Yamamura Y."/>
            <person name="Yuan S."/>
            <person name="Shinozaki K."/>
            <person name="Davis R.W."/>
            <person name="Theologis A."/>
            <person name="Ecker J.R."/>
        </authorList>
    </citation>
    <scope>NUCLEOTIDE SEQUENCE [LARGE SCALE MRNA]</scope>
    <source>
        <strain>cv. Columbia</strain>
    </source>
</reference>
<reference key="4">
    <citation type="submission" date="2004-09" db="EMBL/GenBank/DDBJ databases">
        <title>Large-scale analysis of RIKEN Arabidopsis full-length (RAFL) cDNAs.</title>
        <authorList>
            <person name="Totoki Y."/>
            <person name="Seki M."/>
            <person name="Ishida J."/>
            <person name="Nakajima M."/>
            <person name="Enju A."/>
            <person name="Kamiya A."/>
            <person name="Narusaka M."/>
            <person name="Shin-i T."/>
            <person name="Nakagawa M."/>
            <person name="Sakamoto N."/>
            <person name="Oishi K."/>
            <person name="Kohara Y."/>
            <person name="Kobayashi M."/>
            <person name="Toyoda A."/>
            <person name="Sakaki Y."/>
            <person name="Sakurai T."/>
            <person name="Iida K."/>
            <person name="Akiyama K."/>
            <person name="Satou M."/>
            <person name="Toyoda T."/>
            <person name="Konagaya A."/>
            <person name="Carninci P."/>
            <person name="Kawai J."/>
            <person name="Hayashizaki Y."/>
            <person name="Shinozaki K."/>
        </authorList>
    </citation>
    <scope>NUCLEOTIDE SEQUENCE [LARGE SCALE MRNA]</scope>
    <source>
        <strain>cv. Columbia</strain>
    </source>
</reference>
<reference key="5">
    <citation type="journal article" date="2009" name="Chem. Biol. Interact.">
        <title>The SDR (short-chain dehydrogenase/reductase and related enzymes) nomenclature initiative.</title>
        <authorList>
            <person name="Persson B."/>
            <person name="Kallberg Y."/>
            <person name="Bray J.E."/>
            <person name="Bruford E."/>
            <person name="Dellaporta S.L."/>
            <person name="Favia A.D."/>
            <person name="Duarte R.G."/>
            <person name="Joernvall H."/>
            <person name="Kavanagh K.L."/>
            <person name="Kedishvili N."/>
            <person name="Kisiela M."/>
            <person name="Maser E."/>
            <person name="Mindnich R."/>
            <person name="Orchard S."/>
            <person name="Penning T.M."/>
            <person name="Thornton J.M."/>
            <person name="Adamski J."/>
            <person name="Oppermann U."/>
        </authorList>
    </citation>
    <scope>GENE FAMILY</scope>
    <scope>NOMENCLATURE</scope>
</reference>
<keyword id="KW-0025">Alternative splicing</keyword>
<keyword id="KW-0521">NADP</keyword>
<keyword id="KW-0560">Oxidoreductase</keyword>
<keyword id="KW-1185">Reference proteome</keyword>